<protein>
    <recommendedName>
        <fullName evidence="1">Small ribosomal subunit protein bS21</fullName>
    </recommendedName>
    <alternativeName>
        <fullName evidence="2">30S ribosomal protein S21</fullName>
    </alternativeName>
</protein>
<comment type="similarity">
    <text evidence="1">Belongs to the bacterial ribosomal protein bS21 family.</text>
</comment>
<proteinExistence type="inferred from homology"/>
<name>RS21_RICCN</name>
<organism>
    <name type="scientific">Rickettsia conorii (strain ATCC VR-613 / Malish 7)</name>
    <dbReference type="NCBI Taxonomy" id="272944"/>
    <lineage>
        <taxon>Bacteria</taxon>
        <taxon>Pseudomonadati</taxon>
        <taxon>Pseudomonadota</taxon>
        <taxon>Alphaproteobacteria</taxon>
        <taxon>Rickettsiales</taxon>
        <taxon>Rickettsiaceae</taxon>
        <taxon>Rickettsieae</taxon>
        <taxon>Rickettsia</taxon>
        <taxon>spotted fever group</taxon>
    </lineage>
</organism>
<accession>Q92H23</accession>
<evidence type="ECO:0000255" key="1">
    <source>
        <dbReference type="HAMAP-Rule" id="MF_00358"/>
    </source>
</evidence>
<evidence type="ECO:0000305" key="2"/>
<sequence>MILVNVHAGNCDNTLKNFKKKLQRELYFRKMKEQRYYETPSAKRVRKVQEAARRQRKFARKKMFDE</sequence>
<reference key="1">
    <citation type="journal article" date="2001" name="Science">
        <title>Mechanisms of evolution in Rickettsia conorii and R. prowazekii.</title>
        <authorList>
            <person name="Ogata H."/>
            <person name="Audic S."/>
            <person name="Renesto-Audiffren P."/>
            <person name="Fournier P.-E."/>
            <person name="Barbe V."/>
            <person name="Samson D."/>
            <person name="Roux V."/>
            <person name="Cossart P."/>
            <person name="Weissenbach J."/>
            <person name="Claverie J.-M."/>
            <person name="Raoult D."/>
        </authorList>
    </citation>
    <scope>NUCLEOTIDE SEQUENCE [LARGE SCALE GENOMIC DNA]</scope>
    <source>
        <strain>ATCC VR-613 / Malish 7</strain>
    </source>
</reference>
<feature type="chain" id="PRO_0000178367" description="Small ribosomal subunit protein bS21">
    <location>
        <begin position="1"/>
        <end position="66"/>
    </location>
</feature>
<gene>
    <name evidence="1" type="primary">rpsU</name>
    <name type="ordered locus">RC0949</name>
</gene>
<keyword id="KW-0687">Ribonucleoprotein</keyword>
<keyword id="KW-0689">Ribosomal protein</keyword>
<dbReference type="EMBL" id="AE006914">
    <property type="protein sequence ID" value="AAL03487.1"/>
    <property type="molecule type" value="Genomic_DNA"/>
</dbReference>
<dbReference type="PIR" id="E97818">
    <property type="entry name" value="E97818"/>
</dbReference>
<dbReference type="RefSeq" id="WP_004997902.1">
    <property type="nucleotide sequence ID" value="NC_003103.1"/>
</dbReference>
<dbReference type="SMR" id="Q92H23"/>
<dbReference type="GeneID" id="95361436"/>
<dbReference type="KEGG" id="rco:RC0949"/>
<dbReference type="HOGENOM" id="CLU_159258_0_2_5"/>
<dbReference type="Proteomes" id="UP000000816">
    <property type="component" value="Chromosome"/>
</dbReference>
<dbReference type="GO" id="GO:1990904">
    <property type="term" value="C:ribonucleoprotein complex"/>
    <property type="evidence" value="ECO:0007669"/>
    <property type="project" value="UniProtKB-KW"/>
</dbReference>
<dbReference type="GO" id="GO:0005840">
    <property type="term" value="C:ribosome"/>
    <property type="evidence" value="ECO:0007669"/>
    <property type="project" value="UniProtKB-KW"/>
</dbReference>
<dbReference type="GO" id="GO:0003735">
    <property type="term" value="F:structural constituent of ribosome"/>
    <property type="evidence" value="ECO:0007669"/>
    <property type="project" value="InterPro"/>
</dbReference>
<dbReference type="GO" id="GO:0006412">
    <property type="term" value="P:translation"/>
    <property type="evidence" value="ECO:0007669"/>
    <property type="project" value="UniProtKB-UniRule"/>
</dbReference>
<dbReference type="Gene3D" id="1.20.5.1150">
    <property type="entry name" value="Ribosomal protein S8"/>
    <property type="match status" value="1"/>
</dbReference>
<dbReference type="HAMAP" id="MF_00358">
    <property type="entry name" value="Ribosomal_bS21"/>
    <property type="match status" value="1"/>
</dbReference>
<dbReference type="InterPro" id="IPR001911">
    <property type="entry name" value="Ribosomal_bS21"/>
</dbReference>
<dbReference type="InterPro" id="IPR038380">
    <property type="entry name" value="Ribosomal_bS21_sf"/>
</dbReference>
<dbReference type="NCBIfam" id="TIGR00030">
    <property type="entry name" value="S21p"/>
    <property type="match status" value="1"/>
</dbReference>
<dbReference type="Pfam" id="PF01165">
    <property type="entry name" value="Ribosomal_S21"/>
    <property type="match status" value="1"/>
</dbReference>